<comment type="function">
    <text evidence="1">Involved in DNA repair and RecF pathway recombination.</text>
</comment>
<comment type="similarity">
    <text evidence="1">Belongs to the RecO family.</text>
</comment>
<sequence length="256" mass="29818">MIQSITSQGLVLYNRNFREDDKLVKIFTEQVGKRMFFVKHAGQSKLAPVIQPLVLARFLLRINDDGLSYIEDYHEVMTFPKINSDLFVMAYATYVAALADASLQDNQQDAPLFAFLQKTLELMEAGLDYQVLTNIFEIQILTRFGISLNFNECVFCHRVGQAFDFSFKYGTCLCPEHYHEDERRCHLNPNIPYLLNQFQAIDFETLETISLKPGIKQELRQFMDQLYEEYVGIHLKSKKFIDSLADWGQLLKEEKK</sequence>
<protein>
    <recommendedName>
        <fullName evidence="1">DNA repair protein RecO</fullName>
    </recommendedName>
    <alternativeName>
        <fullName evidence="1">Recombination protein O</fullName>
    </alternativeName>
</protein>
<gene>
    <name evidence="1" type="primary">recO</name>
    <name type="ordered locus">SPD_0042</name>
</gene>
<dbReference type="EMBL" id="CP000410">
    <property type="protein sequence ID" value="ABJ55486.1"/>
    <property type="molecule type" value="Genomic_DNA"/>
</dbReference>
<dbReference type="RefSeq" id="WP_000616166.1">
    <property type="nucleotide sequence ID" value="NZ_JAMLJR010000021.1"/>
</dbReference>
<dbReference type="SMR" id="Q04N32"/>
<dbReference type="PaxDb" id="373153-SPD_0042"/>
<dbReference type="KEGG" id="spd:SPD_0042"/>
<dbReference type="eggNOG" id="COG1381">
    <property type="taxonomic scope" value="Bacteria"/>
</dbReference>
<dbReference type="HOGENOM" id="CLU_066632_4_0_9"/>
<dbReference type="BioCyc" id="SPNE373153:G1G6V-41-MONOMER"/>
<dbReference type="Proteomes" id="UP000001452">
    <property type="component" value="Chromosome"/>
</dbReference>
<dbReference type="GO" id="GO:0043590">
    <property type="term" value="C:bacterial nucleoid"/>
    <property type="evidence" value="ECO:0007669"/>
    <property type="project" value="TreeGrafter"/>
</dbReference>
<dbReference type="GO" id="GO:0006310">
    <property type="term" value="P:DNA recombination"/>
    <property type="evidence" value="ECO:0007669"/>
    <property type="project" value="UniProtKB-UniRule"/>
</dbReference>
<dbReference type="GO" id="GO:0006302">
    <property type="term" value="P:double-strand break repair"/>
    <property type="evidence" value="ECO:0007669"/>
    <property type="project" value="TreeGrafter"/>
</dbReference>
<dbReference type="Gene3D" id="2.40.50.140">
    <property type="entry name" value="Nucleic acid-binding proteins"/>
    <property type="match status" value="1"/>
</dbReference>
<dbReference type="Gene3D" id="1.20.1440.120">
    <property type="entry name" value="Recombination protein O, C-terminal domain"/>
    <property type="match status" value="1"/>
</dbReference>
<dbReference type="HAMAP" id="MF_00201">
    <property type="entry name" value="RecO"/>
    <property type="match status" value="1"/>
</dbReference>
<dbReference type="InterPro" id="IPR037278">
    <property type="entry name" value="ARFGAP/RecO"/>
</dbReference>
<dbReference type="InterPro" id="IPR022572">
    <property type="entry name" value="DNA_rep/recomb_RecO_N"/>
</dbReference>
<dbReference type="InterPro" id="IPR012340">
    <property type="entry name" value="NA-bd_OB-fold"/>
</dbReference>
<dbReference type="InterPro" id="IPR003717">
    <property type="entry name" value="RecO"/>
</dbReference>
<dbReference type="InterPro" id="IPR042242">
    <property type="entry name" value="RecO_C"/>
</dbReference>
<dbReference type="NCBIfam" id="TIGR00613">
    <property type="entry name" value="reco"/>
    <property type="match status" value="1"/>
</dbReference>
<dbReference type="PANTHER" id="PTHR33991">
    <property type="entry name" value="DNA REPAIR PROTEIN RECO"/>
    <property type="match status" value="1"/>
</dbReference>
<dbReference type="PANTHER" id="PTHR33991:SF1">
    <property type="entry name" value="DNA REPAIR PROTEIN RECO"/>
    <property type="match status" value="1"/>
</dbReference>
<dbReference type="Pfam" id="PF02565">
    <property type="entry name" value="RecO_C"/>
    <property type="match status" value="1"/>
</dbReference>
<dbReference type="Pfam" id="PF11967">
    <property type="entry name" value="RecO_N"/>
    <property type="match status" value="1"/>
</dbReference>
<dbReference type="SUPFAM" id="SSF57863">
    <property type="entry name" value="ArfGap/RecO-like zinc finger"/>
    <property type="match status" value="1"/>
</dbReference>
<dbReference type="SUPFAM" id="SSF50249">
    <property type="entry name" value="Nucleic acid-binding proteins"/>
    <property type="match status" value="1"/>
</dbReference>
<reference key="1">
    <citation type="journal article" date="2007" name="J. Bacteriol.">
        <title>Genome sequence of Avery's virulent serotype 2 strain D39 of Streptococcus pneumoniae and comparison with that of unencapsulated laboratory strain R6.</title>
        <authorList>
            <person name="Lanie J.A."/>
            <person name="Ng W.-L."/>
            <person name="Kazmierczak K.M."/>
            <person name="Andrzejewski T.M."/>
            <person name="Davidsen T.M."/>
            <person name="Wayne K.J."/>
            <person name="Tettelin H."/>
            <person name="Glass J.I."/>
            <person name="Winkler M.E."/>
        </authorList>
    </citation>
    <scope>NUCLEOTIDE SEQUENCE [LARGE SCALE GENOMIC DNA]</scope>
    <source>
        <strain>D39 / NCTC 7466</strain>
    </source>
</reference>
<accession>Q04N32</accession>
<keyword id="KW-0227">DNA damage</keyword>
<keyword id="KW-0233">DNA recombination</keyword>
<keyword id="KW-0234">DNA repair</keyword>
<keyword id="KW-1185">Reference proteome</keyword>
<proteinExistence type="inferred from homology"/>
<organism>
    <name type="scientific">Streptococcus pneumoniae serotype 2 (strain D39 / NCTC 7466)</name>
    <dbReference type="NCBI Taxonomy" id="373153"/>
    <lineage>
        <taxon>Bacteria</taxon>
        <taxon>Bacillati</taxon>
        <taxon>Bacillota</taxon>
        <taxon>Bacilli</taxon>
        <taxon>Lactobacillales</taxon>
        <taxon>Streptococcaceae</taxon>
        <taxon>Streptococcus</taxon>
    </lineage>
</organism>
<feature type="chain" id="PRO_1000012159" description="DNA repair protein RecO">
    <location>
        <begin position="1"/>
        <end position="256"/>
    </location>
</feature>
<name>RECO_STRP2</name>
<evidence type="ECO:0000255" key="1">
    <source>
        <dbReference type="HAMAP-Rule" id="MF_00201"/>
    </source>
</evidence>